<proteinExistence type="inferred from homology"/>
<comment type="function">
    <text evidence="1">Component of the NuA4 histone acetyltransferase complex which is involved in transcriptional activation of selected genes principally by acetylation of nucleosomal histone H4 and H2A. The NuA4 complex is also involved in DNA repair (By similarity).</text>
</comment>
<comment type="subunit">
    <text evidence="1">Component of the NuA4 histone acetyltransferase complex.</text>
</comment>
<comment type="subcellular location">
    <subcellularLocation>
        <location evidence="1">Nucleus</location>
    </subcellularLocation>
</comment>
<comment type="similarity">
    <text evidence="4">Belongs to the EAF6 family.</text>
</comment>
<name>EAF6_NEUCR</name>
<evidence type="ECO:0000250" key="1"/>
<evidence type="ECO:0000255" key="2"/>
<evidence type="ECO:0000256" key="3">
    <source>
        <dbReference type="SAM" id="MobiDB-lite"/>
    </source>
</evidence>
<evidence type="ECO:0000305" key="4"/>
<feature type="chain" id="PRO_0000086898" description="Chromatin modification-related protein eaf6">
    <location>
        <begin position="1"/>
        <end position="187"/>
    </location>
</feature>
<feature type="region of interest" description="Disordered" evidence="3">
    <location>
        <begin position="99"/>
        <end position="187"/>
    </location>
</feature>
<feature type="coiled-coil region" evidence="2">
    <location>
        <begin position="20"/>
        <end position="49"/>
    </location>
</feature>
<feature type="compositionally biased region" description="Low complexity" evidence="3">
    <location>
        <begin position="104"/>
        <end position="129"/>
    </location>
</feature>
<feature type="compositionally biased region" description="Low complexity" evidence="3">
    <location>
        <begin position="136"/>
        <end position="150"/>
    </location>
</feature>
<gene>
    <name type="primary">eaf6</name>
    <name type="ORF">NCU03289</name>
</gene>
<protein>
    <recommendedName>
        <fullName>Chromatin modification-related protein eaf6</fullName>
    </recommendedName>
</protein>
<organism>
    <name type="scientific">Neurospora crassa (strain ATCC 24698 / 74-OR23-1A / CBS 708.71 / DSM 1257 / FGSC 987)</name>
    <dbReference type="NCBI Taxonomy" id="367110"/>
    <lineage>
        <taxon>Eukaryota</taxon>
        <taxon>Fungi</taxon>
        <taxon>Dikarya</taxon>
        <taxon>Ascomycota</taxon>
        <taxon>Pezizomycotina</taxon>
        <taxon>Sordariomycetes</taxon>
        <taxon>Sordariomycetidae</taxon>
        <taxon>Sordariales</taxon>
        <taxon>Sordariaceae</taxon>
        <taxon>Neurospora</taxon>
    </lineage>
</organism>
<reference key="1">
    <citation type="journal article" date="2003" name="Nature">
        <title>The genome sequence of the filamentous fungus Neurospora crassa.</title>
        <authorList>
            <person name="Galagan J.E."/>
            <person name="Calvo S.E."/>
            <person name="Borkovich K.A."/>
            <person name="Selker E.U."/>
            <person name="Read N.D."/>
            <person name="Jaffe D.B."/>
            <person name="FitzHugh W."/>
            <person name="Ma L.-J."/>
            <person name="Smirnov S."/>
            <person name="Purcell S."/>
            <person name="Rehman B."/>
            <person name="Elkins T."/>
            <person name="Engels R."/>
            <person name="Wang S."/>
            <person name="Nielsen C.B."/>
            <person name="Butler J."/>
            <person name="Endrizzi M."/>
            <person name="Qui D."/>
            <person name="Ianakiev P."/>
            <person name="Bell-Pedersen D."/>
            <person name="Nelson M.A."/>
            <person name="Werner-Washburne M."/>
            <person name="Selitrennikoff C.P."/>
            <person name="Kinsey J.A."/>
            <person name="Braun E.L."/>
            <person name="Zelter A."/>
            <person name="Schulte U."/>
            <person name="Kothe G.O."/>
            <person name="Jedd G."/>
            <person name="Mewes H.-W."/>
            <person name="Staben C."/>
            <person name="Marcotte E."/>
            <person name="Greenberg D."/>
            <person name="Roy A."/>
            <person name="Foley K."/>
            <person name="Naylor J."/>
            <person name="Stange-Thomann N."/>
            <person name="Barrett R."/>
            <person name="Gnerre S."/>
            <person name="Kamal M."/>
            <person name="Kamvysselis M."/>
            <person name="Mauceli E.W."/>
            <person name="Bielke C."/>
            <person name="Rudd S."/>
            <person name="Frishman D."/>
            <person name="Krystofova S."/>
            <person name="Rasmussen C."/>
            <person name="Metzenberg R.L."/>
            <person name="Perkins D.D."/>
            <person name="Kroken S."/>
            <person name="Cogoni C."/>
            <person name="Macino G."/>
            <person name="Catcheside D.E.A."/>
            <person name="Li W."/>
            <person name="Pratt R.J."/>
            <person name="Osmani S.A."/>
            <person name="DeSouza C.P.C."/>
            <person name="Glass N.L."/>
            <person name="Orbach M.J."/>
            <person name="Berglund J.A."/>
            <person name="Voelker R."/>
            <person name="Yarden O."/>
            <person name="Plamann M."/>
            <person name="Seiler S."/>
            <person name="Dunlap J.C."/>
            <person name="Radford A."/>
            <person name="Aramayo R."/>
            <person name="Natvig D.O."/>
            <person name="Alex L.A."/>
            <person name="Mannhaupt G."/>
            <person name="Ebbole D.J."/>
            <person name="Freitag M."/>
            <person name="Paulsen I."/>
            <person name="Sachs M.S."/>
            <person name="Lander E.S."/>
            <person name="Nusbaum C."/>
            <person name="Birren B.W."/>
        </authorList>
    </citation>
    <scope>NUCLEOTIDE SEQUENCE [LARGE SCALE GENOMIC DNA]</scope>
    <source>
        <strain>ATCC 24698 / 74-OR23-1A / CBS 708.71 / DSM 1257 / FGSC 987</strain>
    </source>
</reference>
<accession>Q7SDW6</accession>
<dbReference type="EMBL" id="CM002236">
    <property type="protein sequence ID" value="EAA34979.2"/>
    <property type="molecule type" value="Genomic_DNA"/>
</dbReference>
<dbReference type="RefSeq" id="XP_964215.2">
    <property type="nucleotide sequence ID" value="XM_959122.2"/>
</dbReference>
<dbReference type="SMR" id="Q7SDW6"/>
<dbReference type="STRING" id="367110.Q7SDW6"/>
<dbReference type="PaxDb" id="5141-EFNCRP00000002854"/>
<dbReference type="EnsemblFungi" id="EAA34979">
    <property type="protein sequence ID" value="EAA34979"/>
    <property type="gene ID" value="NCU03289"/>
</dbReference>
<dbReference type="GeneID" id="3880364"/>
<dbReference type="KEGG" id="ncr:NCU03289"/>
<dbReference type="VEuPathDB" id="FungiDB:NCU03289"/>
<dbReference type="HOGENOM" id="CLU_081048_1_0_1"/>
<dbReference type="InParanoid" id="Q7SDW6"/>
<dbReference type="OrthoDB" id="440324at2759"/>
<dbReference type="Proteomes" id="UP000001805">
    <property type="component" value="Chromosome 1, Linkage Group I"/>
</dbReference>
<dbReference type="GO" id="GO:0035267">
    <property type="term" value="C:NuA4 histone acetyltransferase complex"/>
    <property type="evidence" value="ECO:0000318"/>
    <property type="project" value="GO_Central"/>
</dbReference>
<dbReference type="GO" id="GO:0005634">
    <property type="term" value="C:nucleus"/>
    <property type="evidence" value="ECO:0007669"/>
    <property type="project" value="UniProtKB-SubCell"/>
</dbReference>
<dbReference type="GO" id="GO:0006325">
    <property type="term" value="P:chromatin organization"/>
    <property type="evidence" value="ECO:0007669"/>
    <property type="project" value="UniProtKB-KW"/>
</dbReference>
<dbReference type="GO" id="GO:0006281">
    <property type="term" value="P:DNA repair"/>
    <property type="evidence" value="ECO:0007669"/>
    <property type="project" value="UniProtKB-KW"/>
</dbReference>
<dbReference type="InterPro" id="IPR015418">
    <property type="entry name" value="Eaf6"/>
</dbReference>
<dbReference type="PANTHER" id="PTHR13476">
    <property type="entry name" value="CHROMATIN MODIFICATION-RELATED PROTEIN MEAF6"/>
    <property type="match status" value="1"/>
</dbReference>
<dbReference type="Pfam" id="PF09340">
    <property type="entry name" value="NuA4"/>
    <property type="match status" value="1"/>
</dbReference>
<keyword id="KW-0156">Chromatin regulator</keyword>
<keyword id="KW-0175">Coiled coil</keyword>
<keyword id="KW-0227">DNA damage</keyword>
<keyword id="KW-0234">DNA repair</keyword>
<keyword id="KW-0539">Nucleus</keyword>
<keyword id="KW-1185">Reference proteome</keyword>
<keyword id="KW-0804">Transcription</keyword>
<keyword id="KW-0805">Transcription regulation</keyword>
<sequence length="187" mass="19901">MMDNSGPKMGAADGAAGIPYYEKQRQHLKELLNKKKLLEKRLLAQEESIYQKETEYLENTPAGNIITGFDNYTKGTANVAAQRRKTGLTDANRVFSRSSISYNPAAQQDSQTPASSAPASHAPTPVSTSFNNKDGASSAPTPTSATAGKANSKKKKAATSGGAGVEDSETDSRETKKARTNFGAVRK</sequence>